<comment type="function">
    <text evidence="1">Required for accurate and efficient protein synthesis under certain stress conditions. May act as a fidelity factor of the translation reaction, by catalyzing a one-codon backward translocation of tRNAs on improperly translocated ribosomes. Back-translocation proceeds from a post-translocation (POST) complex to a pre-translocation (PRE) complex, thus giving elongation factor G a second chance to translocate the tRNAs correctly. Binds to ribosomes in a GTP-dependent manner.</text>
</comment>
<comment type="catalytic activity">
    <reaction evidence="1">
        <text>GTP + H2O = GDP + phosphate + H(+)</text>
        <dbReference type="Rhea" id="RHEA:19669"/>
        <dbReference type="ChEBI" id="CHEBI:15377"/>
        <dbReference type="ChEBI" id="CHEBI:15378"/>
        <dbReference type="ChEBI" id="CHEBI:37565"/>
        <dbReference type="ChEBI" id="CHEBI:43474"/>
        <dbReference type="ChEBI" id="CHEBI:58189"/>
        <dbReference type="EC" id="3.6.5.n1"/>
    </reaction>
</comment>
<comment type="subcellular location">
    <subcellularLocation>
        <location evidence="1">Cell membrane</location>
        <topology evidence="1">Peripheral membrane protein</topology>
        <orientation evidence="1">Cytoplasmic side</orientation>
    </subcellularLocation>
</comment>
<comment type="similarity">
    <text evidence="1">Belongs to the TRAFAC class translation factor GTPase superfamily. Classic translation factor GTPase family. LepA subfamily.</text>
</comment>
<keyword id="KW-1003">Cell membrane</keyword>
<keyword id="KW-0342">GTP-binding</keyword>
<keyword id="KW-0378">Hydrolase</keyword>
<keyword id="KW-0472">Membrane</keyword>
<keyword id="KW-0547">Nucleotide-binding</keyword>
<keyword id="KW-0648">Protein biosynthesis</keyword>
<evidence type="ECO:0000255" key="1">
    <source>
        <dbReference type="HAMAP-Rule" id="MF_00071"/>
    </source>
</evidence>
<proteinExistence type="inferred from homology"/>
<reference key="1">
    <citation type="journal article" date="2007" name="PLoS ONE">
        <title>Analysis of the neurotoxin complex genes in Clostridium botulinum A1-A4 and B1 strains: BoNT/A3, /Ba4 and /B1 clusters are located within plasmids.</title>
        <authorList>
            <person name="Smith T.J."/>
            <person name="Hill K.K."/>
            <person name="Foley B.T."/>
            <person name="Detter J.C."/>
            <person name="Munk A.C."/>
            <person name="Bruce D.C."/>
            <person name="Doggett N.A."/>
            <person name="Smith L.A."/>
            <person name="Marks J.D."/>
            <person name="Xie G."/>
            <person name="Brettin T.S."/>
        </authorList>
    </citation>
    <scope>NUCLEOTIDE SEQUENCE [LARGE SCALE GENOMIC DNA]</scope>
    <source>
        <strain>ATCC 19397 / Type A</strain>
    </source>
</reference>
<gene>
    <name evidence="1" type="primary">lepA</name>
    <name type="ordered locus">CLB_2927</name>
</gene>
<protein>
    <recommendedName>
        <fullName evidence="1">Elongation factor 4</fullName>
        <shortName evidence="1">EF-4</shortName>
        <ecNumber evidence="1">3.6.5.n1</ecNumber>
    </recommendedName>
    <alternativeName>
        <fullName evidence="1">Ribosomal back-translocase LepA</fullName>
    </alternativeName>
</protein>
<organism>
    <name type="scientific">Clostridium botulinum (strain ATCC 19397 / Type A)</name>
    <dbReference type="NCBI Taxonomy" id="441770"/>
    <lineage>
        <taxon>Bacteria</taxon>
        <taxon>Bacillati</taxon>
        <taxon>Bacillota</taxon>
        <taxon>Clostridia</taxon>
        <taxon>Eubacteriales</taxon>
        <taxon>Clostridiaceae</taxon>
        <taxon>Clostridium</taxon>
    </lineage>
</organism>
<feature type="chain" id="PRO_1000031988" description="Elongation factor 4">
    <location>
        <begin position="1"/>
        <end position="602"/>
    </location>
</feature>
<feature type="domain" description="tr-type G">
    <location>
        <begin position="7"/>
        <end position="189"/>
    </location>
</feature>
<feature type="binding site" evidence="1">
    <location>
        <begin position="19"/>
        <end position="24"/>
    </location>
    <ligand>
        <name>GTP</name>
        <dbReference type="ChEBI" id="CHEBI:37565"/>
    </ligand>
</feature>
<feature type="binding site" evidence="1">
    <location>
        <begin position="136"/>
        <end position="139"/>
    </location>
    <ligand>
        <name>GTP</name>
        <dbReference type="ChEBI" id="CHEBI:37565"/>
    </ligand>
</feature>
<accession>A7FXL9</accession>
<dbReference type="EC" id="3.6.5.n1" evidence="1"/>
<dbReference type="EMBL" id="CP000726">
    <property type="protein sequence ID" value="ABS33756.1"/>
    <property type="molecule type" value="Genomic_DNA"/>
</dbReference>
<dbReference type="RefSeq" id="WP_003357725.1">
    <property type="nucleotide sequence ID" value="NC_009697.1"/>
</dbReference>
<dbReference type="SMR" id="A7FXL9"/>
<dbReference type="GeneID" id="5186162"/>
<dbReference type="KEGG" id="cba:CLB_2927"/>
<dbReference type="HOGENOM" id="CLU_009995_3_3_9"/>
<dbReference type="GO" id="GO:0005886">
    <property type="term" value="C:plasma membrane"/>
    <property type="evidence" value="ECO:0007669"/>
    <property type="project" value="UniProtKB-SubCell"/>
</dbReference>
<dbReference type="GO" id="GO:0005525">
    <property type="term" value="F:GTP binding"/>
    <property type="evidence" value="ECO:0007669"/>
    <property type="project" value="UniProtKB-UniRule"/>
</dbReference>
<dbReference type="GO" id="GO:0003924">
    <property type="term" value="F:GTPase activity"/>
    <property type="evidence" value="ECO:0007669"/>
    <property type="project" value="UniProtKB-UniRule"/>
</dbReference>
<dbReference type="GO" id="GO:0043022">
    <property type="term" value="F:ribosome binding"/>
    <property type="evidence" value="ECO:0007669"/>
    <property type="project" value="UniProtKB-UniRule"/>
</dbReference>
<dbReference type="GO" id="GO:0003746">
    <property type="term" value="F:translation elongation factor activity"/>
    <property type="evidence" value="ECO:0007669"/>
    <property type="project" value="UniProtKB-UniRule"/>
</dbReference>
<dbReference type="GO" id="GO:0045727">
    <property type="term" value="P:positive regulation of translation"/>
    <property type="evidence" value="ECO:0007669"/>
    <property type="project" value="UniProtKB-UniRule"/>
</dbReference>
<dbReference type="CDD" id="cd03699">
    <property type="entry name" value="EF4_II"/>
    <property type="match status" value="1"/>
</dbReference>
<dbReference type="CDD" id="cd16260">
    <property type="entry name" value="EF4_III"/>
    <property type="match status" value="1"/>
</dbReference>
<dbReference type="CDD" id="cd01890">
    <property type="entry name" value="LepA"/>
    <property type="match status" value="1"/>
</dbReference>
<dbReference type="CDD" id="cd03709">
    <property type="entry name" value="lepA_C"/>
    <property type="match status" value="1"/>
</dbReference>
<dbReference type="FunFam" id="3.40.50.300:FF:000078">
    <property type="entry name" value="Elongation factor 4"/>
    <property type="match status" value="1"/>
</dbReference>
<dbReference type="FunFam" id="2.40.30.10:FF:000015">
    <property type="entry name" value="Translation factor GUF1, mitochondrial"/>
    <property type="match status" value="1"/>
</dbReference>
<dbReference type="FunFam" id="3.30.70.240:FF:000007">
    <property type="entry name" value="Translation factor GUF1, mitochondrial"/>
    <property type="match status" value="1"/>
</dbReference>
<dbReference type="FunFam" id="3.30.70.2570:FF:000001">
    <property type="entry name" value="Translation factor GUF1, mitochondrial"/>
    <property type="match status" value="1"/>
</dbReference>
<dbReference type="FunFam" id="3.30.70.870:FF:000004">
    <property type="entry name" value="Translation factor GUF1, mitochondrial"/>
    <property type="match status" value="1"/>
</dbReference>
<dbReference type="Gene3D" id="3.30.70.240">
    <property type="match status" value="1"/>
</dbReference>
<dbReference type="Gene3D" id="3.30.70.2570">
    <property type="entry name" value="Elongation factor 4, C-terminal domain"/>
    <property type="match status" value="1"/>
</dbReference>
<dbReference type="Gene3D" id="3.30.70.870">
    <property type="entry name" value="Elongation Factor G (Translational Gtpase), domain 3"/>
    <property type="match status" value="1"/>
</dbReference>
<dbReference type="Gene3D" id="3.40.50.300">
    <property type="entry name" value="P-loop containing nucleotide triphosphate hydrolases"/>
    <property type="match status" value="1"/>
</dbReference>
<dbReference type="Gene3D" id="2.40.30.10">
    <property type="entry name" value="Translation factors"/>
    <property type="match status" value="1"/>
</dbReference>
<dbReference type="HAMAP" id="MF_00071">
    <property type="entry name" value="LepA"/>
    <property type="match status" value="1"/>
</dbReference>
<dbReference type="InterPro" id="IPR006297">
    <property type="entry name" value="EF-4"/>
</dbReference>
<dbReference type="InterPro" id="IPR035647">
    <property type="entry name" value="EFG_III/V"/>
</dbReference>
<dbReference type="InterPro" id="IPR000640">
    <property type="entry name" value="EFG_V-like"/>
</dbReference>
<dbReference type="InterPro" id="IPR004161">
    <property type="entry name" value="EFTu-like_2"/>
</dbReference>
<dbReference type="InterPro" id="IPR031157">
    <property type="entry name" value="G_TR_CS"/>
</dbReference>
<dbReference type="InterPro" id="IPR038363">
    <property type="entry name" value="LepA_C_sf"/>
</dbReference>
<dbReference type="InterPro" id="IPR013842">
    <property type="entry name" value="LepA_CTD"/>
</dbReference>
<dbReference type="InterPro" id="IPR035654">
    <property type="entry name" value="LepA_IV"/>
</dbReference>
<dbReference type="InterPro" id="IPR027417">
    <property type="entry name" value="P-loop_NTPase"/>
</dbReference>
<dbReference type="InterPro" id="IPR005225">
    <property type="entry name" value="Small_GTP-bd"/>
</dbReference>
<dbReference type="InterPro" id="IPR000795">
    <property type="entry name" value="T_Tr_GTP-bd_dom"/>
</dbReference>
<dbReference type="NCBIfam" id="TIGR01393">
    <property type="entry name" value="lepA"/>
    <property type="match status" value="1"/>
</dbReference>
<dbReference type="NCBIfam" id="TIGR00231">
    <property type="entry name" value="small_GTP"/>
    <property type="match status" value="1"/>
</dbReference>
<dbReference type="PANTHER" id="PTHR43512:SF4">
    <property type="entry name" value="TRANSLATION FACTOR GUF1 HOMOLOG, CHLOROPLASTIC"/>
    <property type="match status" value="1"/>
</dbReference>
<dbReference type="PANTHER" id="PTHR43512">
    <property type="entry name" value="TRANSLATION FACTOR GUF1-RELATED"/>
    <property type="match status" value="1"/>
</dbReference>
<dbReference type="Pfam" id="PF00679">
    <property type="entry name" value="EFG_C"/>
    <property type="match status" value="1"/>
</dbReference>
<dbReference type="Pfam" id="PF00009">
    <property type="entry name" value="GTP_EFTU"/>
    <property type="match status" value="1"/>
</dbReference>
<dbReference type="Pfam" id="PF03144">
    <property type="entry name" value="GTP_EFTU_D2"/>
    <property type="match status" value="1"/>
</dbReference>
<dbReference type="Pfam" id="PF06421">
    <property type="entry name" value="LepA_C"/>
    <property type="match status" value="1"/>
</dbReference>
<dbReference type="PRINTS" id="PR00315">
    <property type="entry name" value="ELONGATNFCT"/>
</dbReference>
<dbReference type="SMART" id="SM00838">
    <property type="entry name" value="EFG_C"/>
    <property type="match status" value="1"/>
</dbReference>
<dbReference type="SUPFAM" id="SSF54980">
    <property type="entry name" value="EF-G C-terminal domain-like"/>
    <property type="match status" value="2"/>
</dbReference>
<dbReference type="SUPFAM" id="SSF52540">
    <property type="entry name" value="P-loop containing nucleoside triphosphate hydrolases"/>
    <property type="match status" value="1"/>
</dbReference>
<dbReference type="PROSITE" id="PS00301">
    <property type="entry name" value="G_TR_1"/>
    <property type="match status" value="1"/>
</dbReference>
<dbReference type="PROSITE" id="PS51722">
    <property type="entry name" value="G_TR_2"/>
    <property type="match status" value="1"/>
</dbReference>
<name>LEPA_CLOB1</name>
<sequence length="602" mass="67158">MQSERQKYIRNFSIVAHIDHGKSTLADRLIEATGTLTEREMDTQVLDNMDLEKERGITIKSQAVRLIYKRDTGEEYTLNLIDTPGHVDFNYEVSRSLAACEGAILVVDATQGIQAQTLANCYLALDNDLEIVPVINKIDLPSARPEEVKQEIEDVIGIEAEDAPLVSAKTGLNIKDALEAIVNKVPAPDGDEKAPLKALIFDSYYDSYKGVVCHIRVKEGAIKEGTEIKLMNTGKVYEVVEVGVFVPNYMPVDELKAGDVGYVTASIKNVRDARVGDTITEAKRSANEALSGYRPAVPMVFSGIYPVDGAKYEELKEALEKLQVNDAALSFEPETSIALGFGFRCGFLGLLHMDIIQERLEREFNLDIITTAPSVIYKITKTDGTLIELTNPTNMPSPSEIKLMEEPIVKSSIITPSDYVGAVMDLAQNRRGIFKDMQYLDTTRVSLNYEIPLNEIIYDFFDALKSRTRGYASFDYELIGYKDADLVKLDILLNADVVDALSMIVPRERAYAKGRNMAQKLKEIIPRQMFEIPIQAAVGAKIIARETIKAMRKDVLAKCYGGDISRKRKLLEKQKEGKKRMRQVGSVEVPQEAFMAVLKTEE</sequence>